<proteinExistence type="inferred from homology"/>
<name>NADE_META3</name>
<keyword id="KW-0067">ATP-binding</keyword>
<keyword id="KW-0436">Ligase</keyword>
<keyword id="KW-0460">Magnesium</keyword>
<keyword id="KW-0479">Metal-binding</keyword>
<keyword id="KW-0520">NAD</keyword>
<keyword id="KW-0547">Nucleotide-binding</keyword>
<feature type="chain" id="PRO_1000077574" description="NH(3)-dependent NAD(+) synthetase">
    <location>
        <begin position="1"/>
        <end position="254"/>
    </location>
</feature>
<feature type="binding site" evidence="1">
    <location>
        <begin position="29"/>
        <end position="36"/>
    </location>
    <ligand>
        <name>ATP</name>
        <dbReference type="ChEBI" id="CHEBI:30616"/>
    </ligand>
</feature>
<feature type="binding site" evidence="1">
    <location>
        <position position="35"/>
    </location>
    <ligand>
        <name>Mg(2+)</name>
        <dbReference type="ChEBI" id="CHEBI:18420"/>
    </ligand>
</feature>
<feature type="binding site" evidence="1">
    <location>
        <position position="115"/>
    </location>
    <ligand>
        <name>deamido-NAD(+)</name>
        <dbReference type="ChEBI" id="CHEBI:58437"/>
    </ligand>
</feature>
<feature type="binding site" evidence="1">
    <location>
        <position position="135"/>
    </location>
    <ligand>
        <name>ATP</name>
        <dbReference type="ChEBI" id="CHEBI:30616"/>
    </ligand>
</feature>
<feature type="binding site" evidence="1">
    <location>
        <position position="140"/>
    </location>
    <ligand>
        <name>Mg(2+)</name>
        <dbReference type="ChEBI" id="CHEBI:18420"/>
    </ligand>
</feature>
<feature type="binding site" evidence="1">
    <location>
        <position position="148"/>
    </location>
    <ligand>
        <name>deamido-NAD(+)</name>
        <dbReference type="ChEBI" id="CHEBI:58437"/>
    </ligand>
</feature>
<feature type="binding site" evidence="1">
    <location>
        <position position="155"/>
    </location>
    <ligand>
        <name>deamido-NAD(+)</name>
        <dbReference type="ChEBI" id="CHEBI:58437"/>
    </ligand>
</feature>
<feature type="binding site" evidence="1">
    <location>
        <position position="164"/>
    </location>
    <ligand>
        <name>ATP</name>
        <dbReference type="ChEBI" id="CHEBI:30616"/>
    </ligand>
</feature>
<feature type="binding site" evidence="1">
    <location>
        <position position="186"/>
    </location>
    <ligand>
        <name>ATP</name>
        <dbReference type="ChEBI" id="CHEBI:30616"/>
    </ligand>
</feature>
<feature type="binding site" evidence="1">
    <location>
        <begin position="245"/>
        <end position="246"/>
    </location>
    <ligand>
        <name>deamido-NAD(+)</name>
        <dbReference type="ChEBI" id="CHEBI:58437"/>
    </ligand>
</feature>
<gene>
    <name evidence="1" type="primary">nadE</name>
    <name type="ordered locus">Maeo_0662</name>
</gene>
<evidence type="ECO:0000255" key="1">
    <source>
        <dbReference type="HAMAP-Rule" id="MF_00193"/>
    </source>
</evidence>
<sequence>MNCEELTNKLTNFVLSKVGEANAKGVVLGLSGGIDSSLVATICVKALGKDNVLGVIMPEKNSNTQDKEHAELLANQLGIKYTVSDITDVLKSFGAGGYIPTKEFDKMADGNLKPRIRMCILYYFANKNNLLVAGTSNKSEIYMGYGTKYGDLGSDFLLIGNLFKTEVRELSKYLGVPDEIINKAPSAGLWEGQTDEKELGITYELLDKVLMAIEQNKEKEDISKELTVPIEKIEEILNRIESNKHKSQPIPIPN</sequence>
<organism>
    <name type="scientific">Methanococcus aeolicus (strain ATCC BAA-1280 / DSM 17508 / OCM 812 / Nankai-3)</name>
    <dbReference type="NCBI Taxonomy" id="419665"/>
    <lineage>
        <taxon>Archaea</taxon>
        <taxon>Methanobacteriati</taxon>
        <taxon>Methanobacteriota</taxon>
        <taxon>Methanomada group</taxon>
        <taxon>Methanococci</taxon>
        <taxon>Methanococcales</taxon>
        <taxon>Methanococcaceae</taxon>
        <taxon>Methanococcus</taxon>
    </lineage>
</organism>
<protein>
    <recommendedName>
        <fullName evidence="1">NH(3)-dependent NAD(+) synthetase</fullName>
        <ecNumber evidence="1">6.3.1.5</ecNumber>
    </recommendedName>
</protein>
<comment type="function">
    <text evidence="1">Catalyzes the ATP-dependent amidation of deamido-NAD to form NAD. Uses ammonia as a nitrogen source.</text>
</comment>
<comment type="catalytic activity">
    <reaction evidence="1">
        <text>deamido-NAD(+) + NH4(+) + ATP = AMP + diphosphate + NAD(+) + H(+)</text>
        <dbReference type="Rhea" id="RHEA:21188"/>
        <dbReference type="ChEBI" id="CHEBI:15378"/>
        <dbReference type="ChEBI" id="CHEBI:28938"/>
        <dbReference type="ChEBI" id="CHEBI:30616"/>
        <dbReference type="ChEBI" id="CHEBI:33019"/>
        <dbReference type="ChEBI" id="CHEBI:57540"/>
        <dbReference type="ChEBI" id="CHEBI:58437"/>
        <dbReference type="ChEBI" id="CHEBI:456215"/>
        <dbReference type="EC" id="6.3.1.5"/>
    </reaction>
</comment>
<comment type="pathway">
    <text evidence="1">Cofactor biosynthesis; NAD(+) biosynthesis; NAD(+) from deamido-NAD(+) (ammonia route): step 1/1.</text>
</comment>
<comment type="subunit">
    <text evidence="1">Homodimer.</text>
</comment>
<comment type="similarity">
    <text evidence="1">Belongs to the NAD synthetase family.</text>
</comment>
<reference key="1">
    <citation type="submission" date="2007-06" db="EMBL/GenBank/DDBJ databases">
        <title>Complete sequence of Methanococcus aeolicus Nankai-3.</title>
        <authorList>
            <consortium name="US DOE Joint Genome Institute"/>
            <person name="Copeland A."/>
            <person name="Lucas S."/>
            <person name="Lapidus A."/>
            <person name="Barry K."/>
            <person name="Glavina del Rio T."/>
            <person name="Dalin E."/>
            <person name="Tice H."/>
            <person name="Pitluck S."/>
            <person name="Chain P."/>
            <person name="Malfatti S."/>
            <person name="Shin M."/>
            <person name="Vergez L."/>
            <person name="Schmutz J."/>
            <person name="Larimer F."/>
            <person name="Land M."/>
            <person name="Hauser L."/>
            <person name="Kyrpides N."/>
            <person name="Lykidis A."/>
            <person name="Sieprawska-Lupa M."/>
            <person name="Whitman W.B."/>
            <person name="Richardson P."/>
        </authorList>
    </citation>
    <scope>NUCLEOTIDE SEQUENCE [LARGE SCALE GENOMIC DNA]</scope>
    <source>
        <strain>ATCC BAA-1280 / DSM 17508 / OCM 812 / Nankai-3</strain>
    </source>
</reference>
<dbReference type="EC" id="6.3.1.5" evidence="1"/>
<dbReference type="EMBL" id="CP000743">
    <property type="protein sequence ID" value="ABR56246.1"/>
    <property type="molecule type" value="Genomic_DNA"/>
</dbReference>
<dbReference type="RefSeq" id="WP_011973378.1">
    <property type="nucleotide sequence ID" value="NC_009635.1"/>
</dbReference>
<dbReference type="SMR" id="A6UUS4"/>
<dbReference type="STRING" id="419665.Maeo_0662"/>
<dbReference type="GeneID" id="5326908"/>
<dbReference type="KEGG" id="mae:Maeo_0662"/>
<dbReference type="eggNOG" id="arCOG00069">
    <property type="taxonomic scope" value="Archaea"/>
</dbReference>
<dbReference type="HOGENOM" id="CLU_059327_1_1_2"/>
<dbReference type="OrthoDB" id="39312at2157"/>
<dbReference type="UniPathway" id="UPA00253">
    <property type="reaction ID" value="UER00333"/>
</dbReference>
<dbReference type="Proteomes" id="UP000001106">
    <property type="component" value="Chromosome"/>
</dbReference>
<dbReference type="GO" id="GO:0005737">
    <property type="term" value="C:cytoplasm"/>
    <property type="evidence" value="ECO:0007669"/>
    <property type="project" value="InterPro"/>
</dbReference>
<dbReference type="GO" id="GO:0005524">
    <property type="term" value="F:ATP binding"/>
    <property type="evidence" value="ECO:0007669"/>
    <property type="project" value="UniProtKB-UniRule"/>
</dbReference>
<dbReference type="GO" id="GO:0004359">
    <property type="term" value="F:glutaminase activity"/>
    <property type="evidence" value="ECO:0007669"/>
    <property type="project" value="InterPro"/>
</dbReference>
<dbReference type="GO" id="GO:0046872">
    <property type="term" value="F:metal ion binding"/>
    <property type="evidence" value="ECO:0007669"/>
    <property type="project" value="UniProtKB-KW"/>
</dbReference>
<dbReference type="GO" id="GO:0003952">
    <property type="term" value="F:NAD+ synthase (glutamine-hydrolyzing) activity"/>
    <property type="evidence" value="ECO:0007669"/>
    <property type="project" value="InterPro"/>
</dbReference>
<dbReference type="GO" id="GO:0008795">
    <property type="term" value="F:NAD+ synthase activity"/>
    <property type="evidence" value="ECO:0007669"/>
    <property type="project" value="UniProtKB-UniRule"/>
</dbReference>
<dbReference type="GO" id="GO:0009435">
    <property type="term" value="P:NAD biosynthetic process"/>
    <property type="evidence" value="ECO:0007669"/>
    <property type="project" value="UniProtKB-UniRule"/>
</dbReference>
<dbReference type="CDD" id="cd00553">
    <property type="entry name" value="NAD_synthase"/>
    <property type="match status" value="1"/>
</dbReference>
<dbReference type="FunFam" id="3.40.50.620:FF:000106">
    <property type="entry name" value="Glutamine-dependent NAD(+) synthetase"/>
    <property type="match status" value="1"/>
</dbReference>
<dbReference type="Gene3D" id="3.40.50.620">
    <property type="entry name" value="HUPs"/>
    <property type="match status" value="1"/>
</dbReference>
<dbReference type="HAMAP" id="MF_00193">
    <property type="entry name" value="NadE_ammonia_dep"/>
    <property type="match status" value="1"/>
</dbReference>
<dbReference type="InterPro" id="IPR022310">
    <property type="entry name" value="NAD/GMP_synthase"/>
</dbReference>
<dbReference type="InterPro" id="IPR003694">
    <property type="entry name" value="NAD_synthase"/>
</dbReference>
<dbReference type="InterPro" id="IPR022926">
    <property type="entry name" value="NH(3)-dep_NAD(+)_synth"/>
</dbReference>
<dbReference type="InterPro" id="IPR014729">
    <property type="entry name" value="Rossmann-like_a/b/a_fold"/>
</dbReference>
<dbReference type="NCBIfam" id="TIGR00552">
    <property type="entry name" value="nadE"/>
    <property type="match status" value="1"/>
</dbReference>
<dbReference type="NCBIfam" id="NF010587">
    <property type="entry name" value="PRK13980.1"/>
    <property type="match status" value="1"/>
</dbReference>
<dbReference type="PANTHER" id="PTHR23090:SF9">
    <property type="entry name" value="GLUTAMINE-DEPENDENT NAD(+) SYNTHETASE"/>
    <property type="match status" value="1"/>
</dbReference>
<dbReference type="PANTHER" id="PTHR23090">
    <property type="entry name" value="NH 3 /GLUTAMINE-DEPENDENT NAD + SYNTHETASE"/>
    <property type="match status" value="1"/>
</dbReference>
<dbReference type="Pfam" id="PF02540">
    <property type="entry name" value="NAD_synthase"/>
    <property type="match status" value="1"/>
</dbReference>
<dbReference type="SUPFAM" id="SSF52402">
    <property type="entry name" value="Adenine nucleotide alpha hydrolases-like"/>
    <property type="match status" value="1"/>
</dbReference>
<accession>A6UUS4</accession>